<gene>
    <name evidence="1" type="primary">dnaA</name>
    <name type="ordered locus">lp_0001</name>
</gene>
<keyword id="KW-0067">ATP-binding</keyword>
<keyword id="KW-0963">Cytoplasm</keyword>
<keyword id="KW-0235">DNA replication</keyword>
<keyword id="KW-0238">DNA-binding</keyword>
<keyword id="KW-0446">Lipid-binding</keyword>
<keyword id="KW-0547">Nucleotide-binding</keyword>
<keyword id="KW-1185">Reference proteome</keyword>
<reference key="1">
    <citation type="journal article" date="2003" name="Proc. Natl. Acad. Sci. U.S.A.">
        <title>Complete genome sequence of Lactobacillus plantarum WCFS1.</title>
        <authorList>
            <person name="Kleerebezem M."/>
            <person name="Boekhorst J."/>
            <person name="van Kranenburg R."/>
            <person name="Molenaar D."/>
            <person name="Kuipers O.P."/>
            <person name="Leer R."/>
            <person name="Tarchini R."/>
            <person name="Peters S.A."/>
            <person name="Sandbrink H.M."/>
            <person name="Fiers M.W.E.J."/>
            <person name="Stiekema W."/>
            <person name="Klein Lankhorst R.M."/>
            <person name="Bron P.A."/>
            <person name="Hoffer S.M."/>
            <person name="Nierop Groot M.N."/>
            <person name="Kerkhoven R."/>
            <person name="De Vries M."/>
            <person name="Ursing B."/>
            <person name="De Vos W.M."/>
            <person name="Siezen R.J."/>
        </authorList>
    </citation>
    <scope>NUCLEOTIDE SEQUENCE [LARGE SCALE GENOMIC DNA]</scope>
    <source>
        <strain>ATCC BAA-793 / NCIMB 8826 / WCFS1</strain>
    </source>
</reference>
<reference key="2">
    <citation type="journal article" date="2012" name="J. Bacteriol.">
        <title>Complete resequencing and reannotation of the Lactobacillus plantarum WCFS1 genome.</title>
        <authorList>
            <person name="Siezen R.J."/>
            <person name="Francke C."/>
            <person name="Renckens B."/>
            <person name="Boekhorst J."/>
            <person name="Wels M."/>
            <person name="Kleerebezem M."/>
            <person name="van Hijum S.A."/>
        </authorList>
    </citation>
    <scope>NUCLEOTIDE SEQUENCE [LARGE SCALE GENOMIC DNA]</scope>
    <scope>GENOME REANNOTATION</scope>
    <source>
        <strain>ATCC BAA-793 / NCIMB 8826 / WCFS1</strain>
    </source>
</reference>
<comment type="function">
    <text evidence="1">Plays an essential role in the initiation and regulation of chromosomal replication. ATP-DnaA binds to the origin of replication (oriC) to initiate formation of the DNA replication initiation complex once per cell cycle. Binds the DnaA box (a 9 base pair repeat at the origin) and separates the double-stranded (ds)DNA. Forms a right-handed helical filament on oriC DNA; dsDNA binds to the exterior of the filament while single-stranded (ss)DNA is stabiized in the filament's interior. The ATP-DnaA-oriC complex binds and stabilizes one strand of the AT-rich DNA unwinding element (DUE), permitting loading of DNA polymerase. After initiation quickly degrades to an ADP-DnaA complex that is not apt for DNA replication. Binds acidic phospholipids.</text>
</comment>
<comment type="subunit">
    <text evidence="1">Oligomerizes as a right-handed, spiral filament on DNA at oriC.</text>
</comment>
<comment type="subcellular location">
    <subcellularLocation>
        <location evidence="1">Cytoplasm</location>
    </subcellularLocation>
</comment>
<comment type="domain">
    <text evidence="1">Domain I is involved in oligomerization and binding regulators, domain II is flexibile and of varying length in different bacteria, domain III forms the AAA+ region, while domain IV binds dsDNA.</text>
</comment>
<comment type="similarity">
    <text evidence="1">Belongs to the DnaA family.</text>
</comment>
<sequence>MLERNDLWNLIKFSMEQDLSKITFQTFVEPAKPLQLDKAQMTIEVPTQLHRDYWEKNLAAKFTDIAMQATNEQIRPVMITEEERQQLTRDKDSQVTTGNVAGQQPTTATTPTFMRETKLNPKYTFDTFVIGKGNQMAHAAALVVSEEPGTMYNPLFFYGGVGLGKTHLMHAIGNKLLETDPTSNIKYVTSESFTNELINAIQTKKQEAFREEYRNVDLLLVDDIQFFANKEATQEEFFHTFNALYEDDKQIVLTSDRLPNEIPQLQDRLVSRFKWGLSVDITPPDLETRIAILRNKADLEGIEIPDDTLSYIAGQIDSNVRELEGALARVQAYSRLNNSPITTSLVADALKSLHLSSKLSEVSIPVIQEKVAKYFHVTMADLKGKKRNKQIVIPRQIAMYLSRELTESSLPRIGNEFGGKDHTTVIHAHDKITKALKTDAELQKAVGDLTGQLKS</sequence>
<organism>
    <name type="scientific">Lactiplantibacillus plantarum (strain ATCC BAA-793 / NCIMB 8826 / WCFS1)</name>
    <name type="common">Lactobacillus plantarum</name>
    <dbReference type="NCBI Taxonomy" id="220668"/>
    <lineage>
        <taxon>Bacteria</taxon>
        <taxon>Bacillati</taxon>
        <taxon>Bacillota</taxon>
        <taxon>Bacilli</taxon>
        <taxon>Lactobacillales</taxon>
        <taxon>Lactobacillaceae</taxon>
        <taxon>Lactiplantibacillus</taxon>
    </lineage>
</organism>
<accession>Q890K8</accession>
<accession>F9US33</accession>
<protein>
    <recommendedName>
        <fullName evidence="1">Chromosomal replication initiator protein DnaA</fullName>
    </recommendedName>
</protein>
<evidence type="ECO:0000255" key="1">
    <source>
        <dbReference type="HAMAP-Rule" id="MF_00377"/>
    </source>
</evidence>
<evidence type="ECO:0000256" key="2">
    <source>
        <dbReference type="SAM" id="MobiDB-lite"/>
    </source>
</evidence>
<proteinExistence type="inferred from homology"/>
<name>DNAA_LACPL</name>
<dbReference type="EMBL" id="AL935263">
    <property type="protein sequence ID" value="CCC77580.1"/>
    <property type="molecule type" value="Genomic_DNA"/>
</dbReference>
<dbReference type="RefSeq" id="WP_003641628.1">
    <property type="nucleotide sequence ID" value="NC_004567.2"/>
</dbReference>
<dbReference type="RefSeq" id="YP_004888094.1">
    <property type="nucleotide sequence ID" value="NC_004567.2"/>
</dbReference>
<dbReference type="SMR" id="Q890K8"/>
<dbReference type="STRING" id="220668.lp_0001"/>
<dbReference type="EnsemblBacteria" id="CCC77580">
    <property type="protein sequence ID" value="CCC77580"/>
    <property type="gene ID" value="lp_0001"/>
</dbReference>
<dbReference type="GeneID" id="77216684"/>
<dbReference type="KEGG" id="lpl:lp_0001"/>
<dbReference type="PATRIC" id="fig|220668.9.peg.1"/>
<dbReference type="eggNOG" id="COG0593">
    <property type="taxonomic scope" value="Bacteria"/>
</dbReference>
<dbReference type="HOGENOM" id="CLU_026910_3_1_9"/>
<dbReference type="OrthoDB" id="9807019at2"/>
<dbReference type="PhylomeDB" id="Q890K8"/>
<dbReference type="Proteomes" id="UP000000432">
    <property type="component" value="Chromosome"/>
</dbReference>
<dbReference type="GO" id="GO:0005737">
    <property type="term" value="C:cytoplasm"/>
    <property type="evidence" value="ECO:0007669"/>
    <property type="project" value="UniProtKB-SubCell"/>
</dbReference>
<dbReference type="GO" id="GO:0005886">
    <property type="term" value="C:plasma membrane"/>
    <property type="evidence" value="ECO:0007669"/>
    <property type="project" value="TreeGrafter"/>
</dbReference>
<dbReference type="GO" id="GO:0005524">
    <property type="term" value="F:ATP binding"/>
    <property type="evidence" value="ECO:0007669"/>
    <property type="project" value="UniProtKB-UniRule"/>
</dbReference>
<dbReference type="GO" id="GO:0016887">
    <property type="term" value="F:ATP hydrolysis activity"/>
    <property type="evidence" value="ECO:0007669"/>
    <property type="project" value="InterPro"/>
</dbReference>
<dbReference type="GO" id="GO:0003688">
    <property type="term" value="F:DNA replication origin binding"/>
    <property type="evidence" value="ECO:0007669"/>
    <property type="project" value="UniProtKB-UniRule"/>
</dbReference>
<dbReference type="GO" id="GO:0008289">
    <property type="term" value="F:lipid binding"/>
    <property type="evidence" value="ECO:0007669"/>
    <property type="project" value="UniProtKB-KW"/>
</dbReference>
<dbReference type="GO" id="GO:0006270">
    <property type="term" value="P:DNA replication initiation"/>
    <property type="evidence" value="ECO:0007669"/>
    <property type="project" value="UniProtKB-UniRule"/>
</dbReference>
<dbReference type="GO" id="GO:0006275">
    <property type="term" value="P:regulation of DNA replication"/>
    <property type="evidence" value="ECO:0007669"/>
    <property type="project" value="UniProtKB-UniRule"/>
</dbReference>
<dbReference type="CDD" id="cd00009">
    <property type="entry name" value="AAA"/>
    <property type="match status" value="1"/>
</dbReference>
<dbReference type="CDD" id="cd06571">
    <property type="entry name" value="Bac_DnaA_C"/>
    <property type="match status" value="1"/>
</dbReference>
<dbReference type="FunFam" id="1.10.1750.10:FF:000002">
    <property type="entry name" value="Chromosomal replication initiator protein DnaA"/>
    <property type="match status" value="1"/>
</dbReference>
<dbReference type="FunFam" id="1.10.8.60:FF:000003">
    <property type="entry name" value="Chromosomal replication initiator protein DnaA"/>
    <property type="match status" value="1"/>
</dbReference>
<dbReference type="FunFam" id="3.40.50.300:FF:000668">
    <property type="entry name" value="Chromosomal replication initiator protein DnaA"/>
    <property type="match status" value="1"/>
</dbReference>
<dbReference type="Gene3D" id="1.10.1750.10">
    <property type="match status" value="1"/>
</dbReference>
<dbReference type="Gene3D" id="1.10.8.60">
    <property type="match status" value="1"/>
</dbReference>
<dbReference type="Gene3D" id="3.30.300.180">
    <property type="match status" value="1"/>
</dbReference>
<dbReference type="Gene3D" id="3.40.50.300">
    <property type="entry name" value="P-loop containing nucleotide triphosphate hydrolases"/>
    <property type="match status" value="1"/>
</dbReference>
<dbReference type="HAMAP" id="MF_00377">
    <property type="entry name" value="DnaA_bact"/>
    <property type="match status" value="1"/>
</dbReference>
<dbReference type="InterPro" id="IPR003593">
    <property type="entry name" value="AAA+_ATPase"/>
</dbReference>
<dbReference type="InterPro" id="IPR001957">
    <property type="entry name" value="Chromosome_initiator_DnaA"/>
</dbReference>
<dbReference type="InterPro" id="IPR020591">
    <property type="entry name" value="Chromosome_initiator_DnaA-like"/>
</dbReference>
<dbReference type="InterPro" id="IPR018312">
    <property type="entry name" value="Chromosome_initiator_DnaA_CS"/>
</dbReference>
<dbReference type="InterPro" id="IPR013159">
    <property type="entry name" value="DnaA_C"/>
</dbReference>
<dbReference type="InterPro" id="IPR013317">
    <property type="entry name" value="DnaA_dom"/>
</dbReference>
<dbReference type="InterPro" id="IPR024633">
    <property type="entry name" value="DnaA_N_dom"/>
</dbReference>
<dbReference type="InterPro" id="IPR038454">
    <property type="entry name" value="DnaA_N_sf"/>
</dbReference>
<dbReference type="InterPro" id="IPR027417">
    <property type="entry name" value="P-loop_NTPase"/>
</dbReference>
<dbReference type="InterPro" id="IPR010921">
    <property type="entry name" value="Trp_repressor/repl_initiator"/>
</dbReference>
<dbReference type="NCBIfam" id="TIGR00362">
    <property type="entry name" value="DnaA"/>
    <property type="match status" value="1"/>
</dbReference>
<dbReference type="PANTHER" id="PTHR30050">
    <property type="entry name" value="CHROMOSOMAL REPLICATION INITIATOR PROTEIN DNAA"/>
    <property type="match status" value="1"/>
</dbReference>
<dbReference type="PANTHER" id="PTHR30050:SF2">
    <property type="entry name" value="CHROMOSOMAL REPLICATION INITIATOR PROTEIN DNAA"/>
    <property type="match status" value="1"/>
</dbReference>
<dbReference type="Pfam" id="PF00308">
    <property type="entry name" value="Bac_DnaA"/>
    <property type="match status" value="1"/>
</dbReference>
<dbReference type="Pfam" id="PF08299">
    <property type="entry name" value="Bac_DnaA_C"/>
    <property type="match status" value="1"/>
</dbReference>
<dbReference type="Pfam" id="PF11638">
    <property type="entry name" value="DnaA_N"/>
    <property type="match status" value="1"/>
</dbReference>
<dbReference type="PRINTS" id="PR00051">
    <property type="entry name" value="DNAA"/>
</dbReference>
<dbReference type="SMART" id="SM00382">
    <property type="entry name" value="AAA"/>
    <property type="match status" value="1"/>
</dbReference>
<dbReference type="SMART" id="SM00760">
    <property type="entry name" value="Bac_DnaA_C"/>
    <property type="match status" value="1"/>
</dbReference>
<dbReference type="SUPFAM" id="SSF52540">
    <property type="entry name" value="P-loop containing nucleoside triphosphate hydrolases"/>
    <property type="match status" value="1"/>
</dbReference>
<dbReference type="SUPFAM" id="SSF48295">
    <property type="entry name" value="TrpR-like"/>
    <property type="match status" value="1"/>
</dbReference>
<dbReference type="PROSITE" id="PS01008">
    <property type="entry name" value="DNAA"/>
    <property type="match status" value="1"/>
</dbReference>
<feature type="chain" id="PRO_0000114194" description="Chromosomal replication initiator protein DnaA">
    <location>
        <begin position="1"/>
        <end position="455"/>
    </location>
</feature>
<feature type="region of interest" description="Domain I, interacts with DnaA modulators" evidence="1">
    <location>
        <begin position="1"/>
        <end position="75"/>
    </location>
</feature>
<feature type="region of interest" description="Domain II" evidence="1">
    <location>
        <begin position="75"/>
        <end position="117"/>
    </location>
</feature>
<feature type="region of interest" description="Disordered" evidence="2">
    <location>
        <begin position="84"/>
        <end position="107"/>
    </location>
</feature>
<feature type="region of interest" description="Domain III, AAA+ region" evidence="1">
    <location>
        <begin position="118"/>
        <end position="334"/>
    </location>
</feature>
<feature type="region of interest" description="Domain IV, binds dsDNA" evidence="1">
    <location>
        <begin position="335"/>
        <end position="455"/>
    </location>
</feature>
<feature type="compositionally biased region" description="Basic and acidic residues" evidence="2">
    <location>
        <begin position="84"/>
        <end position="93"/>
    </location>
</feature>
<feature type="binding site" evidence="1">
    <location>
        <position position="162"/>
    </location>
    <ligand>
        <name>ATP</name>
        <dbReference type="ChEBI" id="CHEBI:30616"/>
    </ligand>
</feature>
<feature type="binding site" evidence="1">
    <location>
        <position position="164"/>
    </location>
    <ligand>
        <name>ATP</name>
        <dbReference type="ChEBI" id="CHEBI:30616"/>
    </ligand>
</feature>
<feature type="binding site" evidence="1">
    <location>
        <position position="165"/>
    </location>
    <ligand>
        <name>ATP</name>
        <dbReference type="ChEBI" id="CHEBI:30616"/>
    </ligand>
</feature>
<feature type="binding site" evidence="1">
    <location>
        <position position="166"/>
    </location>
    <ligand>
        <name>ATP</name>
        <dbReference type="ChEBI" id="CHEBI:30616"/>
    </ligand>
</feature>